<dbReference type="GO" id="GO:0005576">
    <property type="term" value="C:extracellular region"/>
    <property type="evidence" value="ECO:0007669"/>
    <property type="project" value="UniProtKB-SubCell"/>
</dbReference>
<dbReference type="InterPro" id="IPR049518">
    <property type="entry name" value="Pilosulin"/>
</dbReference>
<dbReference type="Pfam" id="PF17499">
    <property type="entry name" value="Pilosulin"/>
    <property type="match status" value="1"/>
</dbReference>
<proteinExistence type="evidence at protein level"/>
<organism>
    <name type="scientific">Myrmecia gulosa</name>
    <name type="common">Red bulldog ant</name>
    <dbReference type="NCBI Taxonomy" id="36170"/>
    <lineage>
        <taxon>Eukaryota</taxon>
        <taxon>Metazoa</taxon>
        <taxon>Ecdysozoa</taxon>
        <taxon>Arthropoda</taxon>
        <taxon>Hexapoda</taxon>
        <taxon>Insecta</taxon>
        <taxon>Pterygota</taxon>
        <taxon>Neoptera</taxon>
        <taxon>Endopterygota</taxon>
        <taxon>Hymenoptera</taxon>
        <taxon>Apocrita</taxon>
        <taxon>Aculeata</taxon>
        <taxon>Formicoidea</taxon>
        <taxon>Formicidae</taxon>
        <taxon>Myrmeciinae</taxon>
        <taxon>Myrmeciini</taxon>
        <taxon>Myrmecia</taxon>
    </lineage>
</organism>
<reference key="1">
    <citation type="journal article" date="2018" name="Sci. Adv.">
        <title>A comprehensive portrait of the venom of the giant red bull ant, Myrmecia gulosa, reveals a hyperdiverse hymenopteran toxin gene family.</title>
        <authorList>
            <person name="Robinson S.D."/>
            <person name="Mueller A."/>
            <person name="Clayton D."/>
            <person name="Starobova H."/>
            <person name="Hamilton B.R."/>
            <person name="Payne R.J."/>
            <person name="Vetter I."/>
            <person name="King G.F."/>
            <person name="Undheim E.A.B."/>
        </authorList>
    </citation>
    <scope>NUCLEOTIDE SEQUENCE [MRNA]</scope>
    <scope>MASS SPECTROMETRY</scope>
    <scope>AMIDATION AT GLN-78</scope>
    <scope>SUBCELLULAR LOCATION</scope>
    <source>
        <tissue>Venom</tissue>
        <tissue>Venom gland</tissue>
    </source>
</reference>
<accession>P0DSK7</accession>
<comment type="function">
    <text evidence="4">May have antimicrobial properties, like most ant linear peptides.</text>
</comment>
<comment type="subcellular location">
    <subcellularLocation>
        <location evidence="2">Secreted</location>
    </subcellularLocation>
</comment>
<comment type="tissue specificity">
    <text evidence="5">Expressed by the venom gland.</text>
</comment>
<comment type="mass spectrometry" mass="3246.96" method="MALDI" evidence="2"/>
<comment type="similarity">
    <text evidence="4">Belongs to the formicidae venom precursor-01 superfamily.</text>
</comment>
<comment type="online information" name="National Center for Biotechnology Information (NCBI)">
    <link uri="https://www.ncbi.nlm.nih.gov/nuccore/GGFG01000014"/>
</comment>
<feature type="signal peptide" evidence="1">
    <location>
        <begin position="1"/>
        <end position="21"/>
    </location>
</feature>
<feature type="propeptide" id="PRO_0000447100" evidence="5">
    <location>
        <begin position="22"/>
        <end position="48"/>
    </location>
</feature>
<feature type="peptide" id="PRO_0000447101" description="U-myrmeciitoxin(01)-Mg9a" evidence="2">
    <location>
        <begin position="49"/>
        <end position="78"/>
    </location>
</feature>
<feature type="modified residue" description="Glutamine amide" evidence="2">
    <location>
        <position position="78"/>
    </location>
</feature>
<keyword id="KW-0027">Amidation</keyword>
<keyword id="KW-0929">Antimicrobial</keyword>
<keyword id="KW-0964">Secreted</keyword>
<keyword id="KW-0732">Signal</keyword>
<evidence type="ECO:0000255" key="1"/>
<evidence type="ECO:0000269" key="2">
    <source>
    </source>
</evidence>
<evidence type="ECO:0000303" key="3">
    <source>
    </source>
</evidence>
<evidence type="ECO:0000305" key="4"/>
<evidence type="ECO:0000305" key="5">
    <source>
    </source>
</evidence>
<protein>
    <recommendedName>
        <fullName evidence="4">U-myrmeciitoxin(01)-Mg9a</fullName>
        <shortName evidence="3">MIITX(01)-Mg9a</shortName>
        <shortName evidence="4">U-MIITX(01)-Mg9a</shortName>
    </recommendedName>
</protein>
<sequence length="79" mass="8252">MKLSCLLLTLAIIFVLTIVHAPNVEAKALANPESDAIGFADAVGEADPNIKWSKYAKKVGKVIVKHGIPLAASIALSQG</sequence>
<name>TX19A_MYRGU</name>